<gene>
    <name type="primary">Syt15</name>
</gene>
<comment type="function">
    <text>May be involved in the trafficking and exocytosis of secretory vesicles in non-neuronal tissues.</text>
</comment>
<comment type="subunit">
    <text evidence="1">Homodimer.</text>
</comment>
<comment type="subcellular location">
    <subcellularLocation>
        <location>Membrane</location>
        <topology>Single-pass type III membrane protein</topology>
    </subcellularLocation>
</comment>
<comment type="alternative products">
    <event type="alternative splicing"/>
    <isoform>
        <id>Q8C6N3-1</id>
        <name>1</name>
        <name>Syt XV-a</name>
        <sequence type="displayed"/>
    </isoform>
    <isoform>
        <id>Q8C6N3-2</id>
        <name>2</name>
        <name>Syt XV-b</name>
        <sequence type="described" ref="VSP_008649 VSP_008650"/>
    </isoform>
</comment>
<comment type="tissue specificity">
    <text evidence="4">Isoform 1 and isoform 2 are expressed in heart, lung, skeletal muscle and testis; not detected in brain, liver and kidney. Isoform 1 is expressed in spleen.</text>
</comment>
<comment type="developmental stage">
    <text evidence="4">Detected from 7 dpc.</text>
</comment>
<comment type="domain">
    <text>Neither C2 domains mediates Ca(2+)-dependent or Ca(2+)-independent phospholipid binding.</text>
</comment>
<comment type="miscellaneous">
    <molecule>Isoform 2</molecule>
    <text evidence="6">May be due to intron retention.</text>
</comment>
<comment type="similarity">
    <text evidence="6">Belongs to the synaptotagmin family.</text>
</comment>
<dbReference type="EMBL" id="AB109019">
    <property type="protein sequence ID" value="BAC76814.1"/>
    <property type="molecule type" value="mRNA"/>
</dbReference>
<dbReference type="EMBL" id="AB109020">
    <property type="protein sequence ID" value="BAC76815.1"/>
    <property type="molecule type" value="mRNA"/>
</dbReference>
<dbReference type="EMBL" id="AK054180">
    <property type="protein sequence ID" value="BAC35683.1"/>
    <property type="molecule type" value="mRNA"/>
</dbReference>
<dbReference type="EMBL" id="BC139313">
    <property type="protein sequence ID" value="AAI39314.1"/>
    <property type="molecule type" value="mRNA"/>
</dbReference>
<dbReference type="EMBL" id="BC139314">
    <property type="protein sequence ID" value="AAI39315.1"/>
    <property type="molecule type" value="mRNA"/>
</dbReference>
<dbReference type="CCDS" id="CCDS26934.1">
    <molecule id="Q8C6N3-1"/>
</dbReference>
<dbReference type="CCDS" id="CCDS49444.1">
    <molecule id="Q8C6N3-2"/>
</dbReference>
<dbReference type="RefSeq" id="NP_795905.2">
    <molecule id="Q8C6N3-2"/>
    <property type="nucleotide sequence ID" value="NM_176931.2"/>
</dbReference>
<dbReference type="RefSeq" id="NP_852682.1">
    <molecule id="Q8C6N3-1"/>
    <property type="nucleotide sequence ID" value="NM_181529.4"/>
</dbReference>
<dbReference type="SMR" id="Q8C6N3"/>
<dbReference type="FunCoup" id="Q8C6N3">
    <property type="interactions" value="338"/>
</dbReference>
<dbReference type="STRING" id="10090.ENSMUSP00000036755"/>
<dbReference type="iPTMnet" id="Q8C6N3"/>
<dbReference type="PhosphoSitePlus" id="Q8C6N3"/>
<dbReference type="PaxDb" id="10090-ENSMUSP00000036755"/>
<dbReference type="ProteomicsDB" id="254792">
    <molecule id="Q8C6N3-1"/>
</dbReference>
<dbReference type="ProteomicsDB" id="254793">
    <molecule id="Q8C6N3-2"/>
</dbReference>
<dbReference type="DNASU" id="319508"/>
<dbReference type="Ensembl" id="ENSMUST00000035351.7">
    <molecule id="Q8C6N3-1"/>
    <property type="protein sequence ID" value="ENSMUSP00000036755.6"/>
    <property type="gene ID" value="ENSMUSG00000041479.15"/>
</dbReference>
<dbReference type="Ensembl" id="ENSMUST00000119693.8">
    <molecule id="Q8C6N3-2"/>
    <property type="protein sequence ID" value="ENSMUSP00000113725.2"/>
    <property type="gene ID" value="ENSMUSG00000041479.15"/>
</dbReference>
<dbReference type="GeneID" id="319508"/>
<dbReference type="KEGG" id="mmu:319508"/>
<dbReference type="UCSC" id="uc007tam.2">
    <molecule id="Q8C6N3-2"/>
    <property type="organism name" value="mouse"/>
</dbReference>
<dbReference type="UCSC" id="uc007tan.2">
    <molecule id="Q8C6N3-1"/>
    <property type="organism name" value="mouse"/>
</dbReference>
<dbReference type="AGR" id="MGI:2442166"/>
<dbReference type="CTD" id="83849"/>
<dbReference type="MGI" id="MGI:2442166">
    <property type="gene designation" value="Syt15"/>
</dbReference>
<dbReference type="VEuPathDB" id="HostDB:ENSMUSG00000041479"/>
<dbReference type="eggNOG" id="KOG1028">
    <property type="taxonomic scope" value="Eukaryota"/>
</dbReference>
<dbReference type="GeneTree" id="ENSGT00940000160819"/>
<dbReference type="HOGENOM" id="CLU_023008_11_1_1"/>
<dbReference type="InParanoid" id="Q8C6N3"/>
<dbReference type="OMA" id="DWIHLTN"/>
<dbReference type="OrthoDB" id="10259057at2759"/>
<dbReference type="PhylomeDB" id="Q8C6N3"/>
<dbReference type="TreeFam" id="TF315600"/>
<dbReference type="BioGRID-ORCS" id="319508">
    <property type="hits" value="1 hit in 77 CRISPR screens"/>
</dbReference>
<dbReference type="PRO" id="PR:Q8C6N3"/>
<dbReference type="Proteomes" id="UP000000589">
    <property type="component" value="Chromosome 14"/>
</dbReference>
<dbReference type="RNAct" id="Q8C6N3">
    <property type="molecule type" value="protein"/>
</dbReference>
<dbReference type="Bgee" id="ENSMUSG00000041479">
    <property type="expression patterns" value="Expressed in pancreas and 39 other cell types or tissues"/>
</dbReference>
<dbReference type="GO" id="GO:0016020">
    <property type="term" value="C:membrane"/>
    <property type="evidence" value="ECO:0000314"/>
    <property type="project" value="MGI"/>
</dbReference>
<dbReference type="CDD" id="cd08390">
    <property type="entry name" value="C2A_Synaptotagmin-15-17"/>
    <property type="match status" value="1"/>
</dbReference>
<dbReference type="FunFam" id="2.60.40.150:FF:000161">
    <property type="entry name" value="Synaptotagmin 15"/>
    <property type="match status" value="1"/>
</dbReference>
<dbReference type="FunFam" id="2.60.40.150:FF:000162">
    <property type="entry name" value="Synaptotagmin-15"/>
    <property type="match status" value="1"/>
</dbReference>
<dbReference type="Gene3D" id="2.60.40.150">
    <property type="entry name" value="C2 domain"/>
    <property type="match status" value="2"/>
</dbReference>
<dbReference type="InterPro" id="IPR000008">
    <property type="entry name" value="C2_dom"/>
</dbReference>
<dbReference type="InterPro" id="IPR035892">
    <property type="entry name" value="C2_domain_sf"/>
</dbReference>
<dbReference type="InterPro" id="IPR047897">
    <property type="entry name" value="Synaptotagmin-15/17_C2A"/>
</dbReference>
<dbReference type="PANTHER" id="PTHR10024">
    <property type="entry name" value="SYNAPTOTAGMIN"/>
    <property type="match status" value="1"/>
</dbReference>
<dbReference type="PANTHER" id="PTHR10024:SF234">
    <property type="entry name" value="SYNAPTOTAGMIN-15-RELATED"/>
    <property type="match status" value="1"/>
</dbReference>
<dbReference type="Pfam" id="PF00168">
    <property type="entry name" value="C2"/>
    <property type="match status" value="2"/>
</dbReference>
<dbReference type="SMART" id="SM00239">
    <property type="entry name" value="C2"/>
    <property type="match status" value="2"/>
</dbReference>
<dbReference type="SUPFAM" id="SSF49562">
    <property type="entry name" value="C2 domain (Calcium/lipid-binding domain, CaLB)"/>
    <property type="match status" value="2"/>
</dbReference>
<dbReference type="PROSITE" id="PS50004">
    <property type="entry name" value="C2"/>
    <property type="match status" value="2"/>
</dbReference>
<accession>Q8C6N3</accession>
<accession>B2RTF1</accession>
<accession>Q7TN81</accession>
<accession>Q7TN82</accession>
<accession>Q8C999</accession>
<protein>
    <recommendedName>
        <fullName>Synaptotagmin-15</fullName>
    </recommendedName>
    <alternativeName>
        <fullName>Synaptotagmin XV</fullName>
        <shortName>SytXV</shortName>
    </alternativeName>
</protein>
<reference key="1">
    <citation type="journal article" date="2003" name="Biochem. Biophys. Res. Commun.">
        <title>Molecular cloning and characterization of human, rat, and mouse synaptotagmin XV.</title>
        <authorList>
            <person name="Fukuda M."/>
        </authorList>
    </citation>
    <scope>NUCLEOTIDE SEQUENCE [MRNA] (ISOFORMS 1 AND 2)</scope>
    <scope>TISSUE SPECIFICITY</scope>
    <scope>DEVELOPMENTAL STAGE</scope>
    <source>
        <strain>BALB/cJ</strain>
    </source>
</reference>
<reference key="2">
    <citation type="journal article" date="2005" name="Science">
        <title>The transcriptional landscape of the mammalian genome.</title>
        <authorList>
            <person name="Carninci P."/>
            <person name="Kasukawa T."/>
            <person name="Katayama S."/>
            <person name="Gough J."/>
            <person name="Frith M.C."/>
            <person name="Maeda N."/>
            <person name="Oyama R."/>
            <person name="Ravasi T."/>
            <person name="Lenhard B."/>
            <person name="Wells C."/>
            <person name="Kodzius R."/>
            <person name="Shimokawa K."/>
            <person name="Bajic V.B."/>
            <person name="Brenner S.E."/>
            <person name="Batalov S."/>
            <person name="Forrest A.R."/>
            <person name="Zavolan M."/>
            <person name="Davis M.J."/>
            <person name="Wilming L.G."/>
            <person name="Aidinis V."/>
            <person name="Allen J.E."/>
            <person name="Ambesi-Impiombato A."/>
            <person name="Apweiler R."/>
            <person name="Aturaliya R.N."/>
            <person name="Bailey T.L."/>
            <person name="Bansal M."/>
            <person name="Baxter L."/>
            <person name="Beisel K.W."/>
            <person name="Bersano T."/>
            <person name="Bono H."/>
            <person name="Chalk A.M."/>
            <person name="Chiu K.P."/>
            <person name="Choudhary V."/>
            <person name="Christoffels A."/>
            <person name="Clutterbuck D.R."/>
            <person name="Crowe M.L."/>
            <person name="Dalla E."/>
            <person name="Dalrymple B.P."/>
            <person name="de Bono B."/>
            <person name="Della Gatta G."/>
            <person name="di Bernardo D."/>
            <person name="Down T."/>
            <person name="Engstrom P."/>
            <person name="Fagiolini M."/>
            <person name="Faulkner G."/>
            <person name="Fletcher C.F."/>
            <person name="Fukushima T."/>
            <person name="Furuno M."/>
            <person name="Futaki S."/>
            <person name="Gariboldi M."/>
            <person name="Georgii-Hemming P."/>
            <person name="Gingeras T.R."/>
            <person name="Gojobori T."/>
            <person name="Green R.E."/>
            <person name="Gustincich S."/>
            <person name="Harbers M."/>
            <person name="Hayashi Y."/>
            <person name="Hensch T.K."/>
            <person name="Hirokawa N."/>
            <person name="Hill D."/>
            <person name="Huminiecki L."/>
            <person name="Iacono M."/>
            <person name="Ikeo K."/>
            <person name="Iwama A."/>
            <person name="Ishikawa T."/>
            <person name="Jakt M."/>
            <person name="Kanapin A."/>
            <person name="Katoh M."/>
            <person name="Kawasawa Y."/>
            <person name="Kelso J."/>
            <person name="Kitamura H."/>
            <person name="Kitano H."/>
            <person name="Kollias G."/>
            <person name="Krishnan S.P."/>
            <person name="Kruger A."/>
            <person name="Kummerfeld S.K."/>
            <person name="Kurochkin I.V."/>
            <person name="Lareau L.F."/>
            <person name="Lazarevic D."/>
            <person name="Lipovich L."/>
            <person name="Liu J."/>
            <person name="Liuni S."/>
            <person name="McWilliam S."/>
            <person name="Madan Babu M."/>
            <person name="Madera M."/>
            <person name="Marchionni L."/>
            <person name="Matsuda H."/>
            <person name="Matsuzawa S."/>
            <person name="Miki H."/>
            <person name="Mignone F."/>
            <person name="Miyake S."/>
            <person name="Morris K."/>
            <person name="Mottagui-Tabar S."/>
            <person name="Mulder N."/>
            <person name="Nakano N."/>
            <person name="Nakauchi H."/>
            <person name="Ng P."/>
            <person name="Nilsson R."/>
            <person name="Nishiguchi S."/>
            <person name="Nishikawa S."/>
            <person name="Nori F."/>
            <person name="Ohara O."/>
            <person name="Okazaki Y."/>
            <person name="Orlando V."/>
            <person name="Pang K.C."/>
            <person name="Pavan W.J."/>
            <person name="Pavesi G."/>
            <person name="Pesole G."/>
            <person name="Petrovsky N."/>
            <person name="Piazza S."/>
            <person name="Reed J."/>
            <person name="Reid J.F."/>
            <person name="Ring B.Z."/>
            <person name="Ringwald M."/>
            <person name="Rost B."/>
            <person name="Ruan Y."/>
            <person name="Salzberg S.L."/>
            <person name="Sandelin A."/>
            <person name="Schneider C."/>
            <person name="Schoenbach C."/>
            <person name="Sekiguchi K."/>
            <person name="Semple C.A."/>
            <person name="Seno S."/>
            <person name="Sessa L."/>
            <person name="Sheng Y."/>
            <person name="Shibata Y."/>
            <person name="Shimada H."/>
            <person name="Shimada K."/>
            <person name="Silva D."/>
            <person name="Sinclair B."/>
            <person name="Sperling S."/>
            <person name="Stupka E."/>
            <person name="Sugiura K."/>
            <person name="Sultana R."/>
            <person name="Takenaka Y."/>
            <person name="Taki K."/>
            <person name="Tammoja K."/>
            <person name="Tan S.L."/>
            <person name="Tang S."/>
            <person name="Taylor M.S."/>
            <person name="Tegner J."/>
            <person name="Teichmann S.A."/>
            <person name="Ueda H.R."/>
            <person name="van Nimwegen E."/>
            <person name="Verardo R."/>
            <person name="Wei C.L."/>
            <person name="Yagi K."/>
            <person name="Yamanishi H."/>
            <person name="Zabarovsky E."/>
            <person name="Zhu S."/>
            <person name="Zimmer A."/>
            <person name="Hide W."/>
            <person name="Bult C."/>
            <person name="Grimmond S.M."/>
            <person name="Teasdale R.D."/>
            <person name="Liu E.T."/>
            <person name="Brusic V."/>
            <person name="Quackenbush J."/>
            <person name="Wahlestedt C."/>
            <person name="Mattick J.S."/>
            <person name="Hume D.A."/>
            <person name="Kai C."/>
            <person name="Sasaki D."/>
            <person name="Tomaru Y."/>
            <person name="Fukuda S."/>
            <person name="Kanamori-Katayama M."/>
            <person name="Suzuki M."/>
            <person name="Aoki J."/>
            <person name="Arakawa T."/>
            <person name="Iida J."/>
            <person name="Imamura K."/>
            <person name="Itoh M."/>
            <person name="Kato T."/>
            <person name="Kawaji H."/>
            <person name="Kawagashira N."/>
            <person name="Kawashima T."/>
            <person name="Kojima M."/>
            <person name="Kondo S."/>
            <person name="Konno H."/>
            <person name="Nakano K."/>
            <person name="Ninomiya N."/>
            <person name="Nishio T."/>
            <person name="Okada M."/>
            <person name="Plessy C."/>
            <person name="Shibata K."/>
            <person name="Shiraki T."/>
            <person name="Suzuki S."/>
            <person name="Tagami M."/>
            <person name="Waki K."/>
            <person name="Watahiki A."/>
            <person name="Okamura-Oho Y."/>
            <person name="Suzuki H."/>
            <person name="Kawai J."/>
            <person name="Hayashizaki Y."/>
        </authorList>
    </citation>
    <scope>NUCLEOTIDE SEQUENCE [LARGE SCALE MRNA] (ISOFORM 1)</scope>
    <source>
        <strain>C57BL/6J</strain>
        <tissue>Oviduct</tissue>
    </source>
</reference>
<reference key="3">
    <citation type="journal article" date="2004" name="Genome Res.">
        <title>The status, quality, and expansion of the NIH full-length cDNA project: the Mammalian Gene Collection (MGC).</title>
        <authorList>
            <consortium name="The MGC Project Team"/>
        </authorList>
    </citation>
    <scope>NUCLEOTIDE SEQUENCE [LARGE SCALE MRNA] (ISOFORM 1)</scope>
    <source>
        <tissue>Brain</tissue>
    </source>
</reference>
<name>SYT15_MOUSE</name>
<organism>
    <name type="scientific">Mus musculus</name>
    <name type="common">Mouse</name>
    <dbReference type="NCBI Taxonomy" id="10090"/>
    <lineage>
        <taxon>Eukaryota</taxon>
        <taxon>Metazoa</taxon>
        <taxon>Chordata</taxon>
        <taxon>Craniata</taxon>
        <taxon>Vertebrata</taxon>
        <taxon>Euteleostomi</taxon>
        <taxon>Mammalia</taxon>
        <taxon>Eutheria</taxon>
        <taxon>Euarchontoglires</taxon>
        <taxon>Glires</taxon>
        <taxon>Rodentia</taxon>
        <taxon>Myomorpha</taxon>
        <taxon>Muroidea</taxon>
        <taxon>Muridae</taxon>
        <taxon>Murinae</taxon>
        <taxon>Mus</taxon>
        <taxon>Mus</taxon>
    </lineage>
</organism>
<evidence type="ECO:0000250" key="1"/>
<evidence type="ECO:0000255" key="2"/>
<evidence type="ECO:0000255" key="3">
    <source>
        <dbReference type="PROSITE-ProRule" id="PRU00041"/>
    </source>
</evidence>
<evidence type="ECO:0000269" key="4">
    <source>
    </source>
</evidence>
<evidence type="ECO:0000303" key="5">
    <source>
    </source>
</evidence>
<evidence type="ECO:0000305" key="6"/>
<sequence length="418" mass="47270">MAEQLAFLIGGIIGGLLLLIGVSCCLWRRFCATFTYEELPETSDPATISYFSRKEDRLYQYSGTPPGRLPSVPFVVPPSHQGRDWVPLHGGDWAVAPQDPCPVPEHMACTSSAKPGDACEMGSINPELYKSPEDTSETGFPDGCLGRLWFSVEYQQESERLLVGLIKAQQLQVPSETCSTLVKLHLLPDERRFLQSKTKHKICNPQFDENFIFQVSSKSVTQRVLKFSVYHVNKKRKHQLLGQVLFPLKNETLAGDHHRIIWRDLEAKNLEPPSEFGDIQFCLSYNDYLSRLTVVVLRAKGLQLQEDRSVVSVFVKVSLMNHNKFVKCKRTSAVLGSVNPVYNETFSFKVDTNELDTASLSLVVLQTTEGNKSSPLGRVVVGPYMYTRGKELEHWGEMLRKPKELVKRWHALCRPTEP</sequence>
<keyword id="KW-0025">Alternative splicing</keyword>
<keyword id="KW-0472">Membrane</keyword>
<keyword id="KW-1185">Reference proteome</keyword>
<keyword id="KW-0677">Repeat</keyword>
<keyword id="KW-0735">Signal-anchor</keyword>
<keyword id="KW-0812">Transmembrane</keyword>
<keyword id="KW-1133">Transmembrane helix</keyword>
<feature type="chain" id="PRO_0000183981" description="Synaptotagmin-15">
    <location>
        <begin position="1"/>
        <end position="418"/>
    </location>
</feature>
<feature type="topological domain" description="Extracellular" evidence="2">
    <location>
        <begin position="1"/>
        <end position="4"/>
    </location>
</feature>
<feature type="transmembrane region" description="Helical; Signal-anchor for type III membrane protein" evidence="2">
    <location>
        <begin position="5"/>
        <end position="27"/>
    </location>
</feature>
<feature type="topological domain" description="Cytoplasmic" evidence="2">
    <location>
        <begin position="28"/>
        <end position="418"/>
    </location>
</feature>
<feature type="domain" description="C2 1" evidence="3">
    <location>
        <begin position="144"/>
        <end position="261"/>
    </location>
</feature>
<feature type="domain" description="C2 2" evidence="3">
    <location>
        <begin position="275"/>
        <end position="396"/>
    </location>
</feature>
<feature type="splice variant" id="VSP_008649" description="In isoform 2." evidence="5">
    <original>KSSPLGRVVVGPYMYTRG</original>
    <variation>SKAWGMGSRGHGVGATQL</variation>
    <location>
        <begin position="372"/>
        <end position="389"/>
    </location>
</feature>
<feature type="splice variant" id="VSP_008650" description="In isoform 2." evidence="5">
    <location>
        <begin position="390"/>
        <end position="418"/>
    </location>
</feature>
<feature type="sequence conflict" description="In Ref. 1; BAC76815." evidence="6" ref="1">
    <original>N</original>
    <variation>D</variation>
    <location>
        <position position="210"/>
    </location>
</feature>
<proteinExistence type="evidence at transcript level"/>